<sequence length="322" mass="36754">MLELAVQKVVVHPLVLLSVVDHFNRIGKVGNQKRVVGVLLGSWQKKVLDVSNSFAVPFDEDDKDDSVWFLDHDYLENMYGMFKKVNARERIVGWYHTGPKLHKNDIAINELMKRYCPNSVLVIIDVKPKDLGLPTEAYISVEEVHDDGTPTSKTFEHVTSEIGAEEAEEVGVEHLLRDIKDTTVGTLSQRITNQVHGLKGLNSKLLDIRGYLEKVATGKLPINHQIIYQLQDVFNLLPDVSLQEFVKAFYLKTNDQMVVVYLASLIRSVVALHNLINNKIANRDAEKKEGQEKEDSKKDRKDDKEKEKEKSDVKKEEKKEKK</sequence>
<protein>
    <recommendedName>
        <fullName>26S proteasome non-ATPase regulatory subunit 7</fullName>
    </recommendedName>
    <alternativeName>
        <fullName>26S proteasome regulatory subunit RPN8</fullName>
    </alternativeName>
</protein>
<name>PSMD7_BOVIN</name>
<proteinExistence type="evidence at transcript level"/>
<accession>Q3ZBD0</accession>
<reference key="1">
    <citation type="submission" date="2005-08" db="EMBL/GenBank/DDBJ databases">
        <authorList>
            <consortium name="NIH - Mammalian Gene Collection (MGC) project"/>
        </authorList>
    </citation>
    <scope>NUCLEOTIDE SEQUENCE [LARGE SCALE MRNA]</scope>
    <source>
        <strain>Hereford</strain>
        <tissue>Hypothalamus</tissue>
    </source>
</reference>
<dbReference type="EMBL" id="BC103437">
    <property type="protein sequence ID" value="AAI03438.1"/>
    <property type="molecule type" value="mRNA"/>
</dbReference>
<dbReference type="RefSeq" id="NP_001029595.1">
    <property type="nucleotide sequence ID" value="NM_001034423.2"/>
</dbReference>
<dbReference type="SMR" id="Q3ZBD0"/>
<dbReference type="FunCoup" id="Q3ZBD0">
    <property type="interactions" value="4227"/>
</dbReference>
<dbReference type="STRING" id="9913.ENSBTAP00000024515"/>
<dbReference type="MEROPS" id="M67.973"/>
<dbReference type="PaxDb" id="9913-ENSBTAP00000024515"/>
<dbReference type="Ensembl" id="ENSBTAT00000024515.4">
    <property type="protein sequence ID" value="ENSBTAP00000024515.4"/>
    <property type="gene ID" value="ENSBTAG00000018425.4"/>
</dbReference>
<dbReference type="GeneID" id="512456"/>
<dbReference type="KEGG" id="bta:512456"/>
<dbReference type="CTD" id="5713"/>
<dbReference type="VEuPathDB" id="HostDB:ENSBTAG00000018425"/>
<dbReference type="VGNC" id="VGNC:33471">
    <property type="gene designation" value="PSMD7"/>
</dbReference>
<dbReference type="eggNOG" id="KOG1556">
    <property type="taxonomic scope" value="Eukaryota"/>
</dbReference>
<dbReference type="GeneTree" id="ENSGT00950000183073"/>
<dbReference type="HOGENOM" id="CLU_027018_3_0_1"/>
<dbReference type="InParanoid" id="Q3ZBD0"/>
<dbReference type="OMA" id="HAMSIKT"/>
<dbReference type="OrthoDB" id="10256771at2759"/>
<dbReference type="Reactome" id="R-BTA-1169091">
    <property type="pathway name" value="Activation of NF-kappaB in B cells"/>
</dbReference>
<dbReference type="Reactome" id="R-BTA-1234176">
    <property type="pathway name" value="Oxygen-dependent proline hydroxylation of Hypoxia-inducible Factor Alpha"/>
</dbReference>
<dbReference type="Reactome" id="R-BTA-1236978">
    <property type="pathway name" value="Cross-presentation of soluble exogenous antigens (endosomes)"/>
</dbReference>
<dbReference type="Reactome" id="R-BTA-174084">
    <property type="pathway name" value="Autodegradation of Cdh1 by Cdh1:APC/C"/>
</dbReference>
<dbReference type="Reactome" id="R-BTA-174154">
    <property type="pathway name" value="APC/C:Cdc20 mediated degradation of Securin"/>
</dbReference>
<dbReference type="Reactome" id="R-BTA-174178">
    <property type="pathway name" value="APC/C:Cdh1 mediated degradation of Cdc20 and other APC/C:Cdh1 targeted proteins in late mitosis/early G1"/>
</dbReference>
<dbReference type="Reactome" id="R-BTA-174184">
    <property type="pathway name" value="Cdc20:Phospho-APC/C mediated degradation of Cyclin A"/>
</dbReference>
<dbReference type="Reactome" id="R-BTA-187577">
    <property type="pathway name" value="SCF(Skp2)-mediated degradation of p27/p21"/>
</dbReference>
<dbReference type="Reactome" id="R-BTA-195253">
    <property type="pathway name" value="Degradation of beta-catenin by the destruction complex"/>
</dbReference>
<dbReference type="Reactome" id="R-BTA-202424">
    <property type="pathway name" value="Downstream TCR signaling"/>
</dbReference>
<dbReference type="Reactome" id="R-BTA-2467813">
    <property type="pathway name" value="Separation of Sister Chromatids"/>
</dbReference>
<dbReference type="Reactome" id="R-BTA-2871837">
    <property type="pathway name" value="FCERI mediated NF-kB activation"/>
</dbReference>
<dbReference type="Reactome" id="R-BTA-349425">
    <property type="pathway name" value="Autodegradation of the E3 ubiquitin ligase COP1"/>
</dbReference>
<dbReference type="Reactome" id="R-BTA-350562">
    <property type="pathway name" value="Regulation of ornithine decarboxylase (ODC)"/>
</dbReference>
<dbReference type="Reactome" id="R-BTA-382556">
    <property type="pathway name" value="ABC-family proteins mediated transport"/>
</dbReference>
<dbReference type="Reactome" id="R-BTA-450408">
    <property type="pathway name" value="AUF1 (hnRNP D0) binds and destabilizes mRNA"/>
</dbReference>
<dbReference type="Reactome" id="R-BTA-4608870">
    <property type="pathway name" value="Asymmetric localization of PCP proteins"/>
</dbReference>
<dbReference type="Reactome" id="R-BTA-4641257">
    <property type="pathway name" value="Degradation of AXIN"/>
</dbReference>
<dbReference type="Reactome" id="R-BTA-4641258">
    <property type="pathway name" value="Degradation of DVL"/>
</dbReference>
<dbReference type="Reactome" id="R-BTA-5358346">
    <property type="pathway name" value="Hedgehog ligand biogenesis"/>
</dbReference>
<dbReference type="Reactome" id="R-BTA-5607761">
    <property type="pathway name" value="Dectin-1 mediated noncanonical NF-kB signaling"/>
</dbReference>
<dbReference type="Reactome" id="R-BTA-5607764">
    <property type="pathway name" value="CLEC7A (Dectin-1) signaling"/>
</dbReference>
<dbReference type="Reactome" id="R-BTA-5610780">
    <property type="pathway name" value="Degradation of GLI1 by the proteasome"/>
</dbReference>
<dbReference type="Reactome" id="R-BTA-5610785">
    <property type="pathway name" value="GLI3 is processed to GLI3R by the proteasome"/>
</dbReference>
<dbReference type="Reactome" id="R-BTA-5632684">
    <property type="pathway name" value="Hedgehog 'on' state"/>
</dbReference>
<dbReference type="Reactome" id="R-BTA-5668541">
    <property type="pathway name" value="TNFR2 non-canonical NF-kB pathway"/>
</dbReference>
<dbReference type="Reactome" id="R-BTA-5676590">
    <property type="pathway name" value="NIK--&gt;noncanonical NF-kB signaling"/>
</dbReference>
<dbReference type="Reactome" id="R-BTA-5687128">
    <property type="pathway name" value="MAPK6/MAPK4 signaling"/>
</dbReference>
<dbReference type="Reactome" id="R-BTA-5689603">
    <property type="pathway name" value="UCH proteinases"/>
</dbReference>
<dbReference type="Reactome" id="R-BTA-5689880">
    <property type="pathway name" value="Ub-specific processing proteases"/>
</dbReference>
<dbReference type="Reactome" id="R-BTA-6798695">
    <property type="pathway name" value="Neutrophil degranulation"/>
</dbReference>
<dbReference type="Reactome" id="R-BTA-68867">
    <property type="pathway name" value="Assembly of the pre-replicative complex"/>
</dbReference>
<dbReference type="Reactome" id="R-BTA-68949">
    <property type="pathway name" value="Orc1 removal from chromatin"/>
</dbReference>
<dbReference type="Reactome" id="R-BTA-69017">
    <property type="pathway name" value="CDK-mediated phosphorylation and removal of Cdc6"/>
</dbReference>
<dbReference type="Reactome" id="R-BTA-69481">
    <property type="pathway name" value="G2/M Checkpoints"/>
</dbReference>
<dbReference type="Reactome" id="R-BTA-69601">
    <property type="pathway name" value="Ubiquitin Mediated Degradation of Phosphorylated Cdc25A"/>
</dbReference>
<dbReference type="Reactome" id="R-BTA-75815">
    <property type="pathway name" value="Ubiquitin-dependent degradation of Cyclin D"/>
</dbReference>
<dbReference type="Reactome" id="R-BTA-8852276">
    <property type="pathway name" value="The role of GTSE1 in G2/M progression after G2 checkpoint"/>
</dbReference>
<dbReference type="Reactome" id="R-BTA-8854050">
    <property type="pathway name" value="FBXL7 down-regulates AURKA during mitotic entry and in early mitosis"/>
</dbReference>
<dbReference type="Reactome" id="R-BTA-8939236">
    <property type="pathway name" value="RUNX1 regulates transcription of genes involved in differentiation of HSCs"/>
</dbReference>
<dbReference type="Reactome" id="R-BTA-8939902">
    <property type="pathway name" value="Regulation of RUNX2 expression and activity"/>
</dbReference>
<dbReference type="Reactome" id="R-BTA-8941858">
    <property type="pathway name" value="Regulation of RUNX3 expression and activity"/>
</dbReference>
<dbReference type="Reactome" id="R-BTA-8948751">
    <property type="pathway name" value="Regulation of PTEN stability and activity"/>
</dbReference>
<dbReference type="Reactome" id="R-BTA-8951664">
    <property type="pathway name" value="Neddylation"/>
</dbReference>
<dbReference type="Reactome" id="R-BTA-9020702">
    <property type="pathway name" value="Interleukin-1 signaling"/>
</dbReference>
<dbReference type="Reactome" id="R-BTA-9755511">
    <property type="pathway name" value="KEAP1-NFE2L2 pathway"/>
</dbReference>
<dbReference type="Reactome" id="R-BTA-9762114">
    <property type="pathway name" value="GSK3B and BTRC:CUL1-mediated-degradation of NFE2L2"/>
</dbReference>
<dbReference type="Reactome" id="R-BTA-983168">
    <property type="pathway name" value="Antigen processing: Ubiquitination &amp; Proteasome degradation"/>
</dbReference>
<dbReference type="Reactome" id="R-BTA-9907900">
    <property type="pathway name" value="Proteasome assembly"/>
</dbReference>
<dbReference type="Proteomes" id="UP000009136">
    <property type="component" value="Chromosome 18"/>
</dbReference>
<dbReference type="Bgee" id="ENSBTAG00000018425">
    <property type="expression patterns" value="Expressed in infraspinatus muscle and 102 other cell types or tissues"/>
</dbReference>
<dbReference type="GO" id="GO:0005829">
    <property type="term" value="C:cytosol"/>
    <property type="evidence" value="ECO:0000304"/>
    <property type="project" value="Reactome"/>
</dbReference>
<dbReference type="GO" id="GO:0000502">
    <property type="term" value="C:proteasome complex"/>
    <property type="evidence" value="ECO:0000318"/>
    <property type="project" value="GO_Central"/>
</dbReference>
<dbReference type="GO" id="GO:0005838">
    <property type="term" value="C:proteasome regulatory particle"/>
    <property type="evidence" value="ECO:0007669"/>
    <property type="project" value="Ensembl"/>
</dbReference>
<dbReference type="GO" id="GO:0008237">
    <property type="term" value="F:metallopeptidase activity"/>
    <property type="evidence" value="ECO:0007669"/>
    <property type="project" value="InterPro"/>
</dbReference>
<dbReference type="GO" id="GO:0042803">
    <property type="term" value="F:protein homodimerization activity"/>
    <property type="evidence" value="ECO:0007669"/>
    <property type="project" value="Ensembl"/>
</dbReference>
<dbReference type="GO" id="GO:0043161">
    <property type="term" value="P:proteasome-mediated ubiquitin-dependent protein catabolic process"/>
    <property type="evidence" value="ECO:0000318"/>
    <property type="project" value="GO_Central"/>
</dbReference>
<dbReference type="CDD" id="cd08062">
    <property type="entry name" value="MPN_RPN7_8"/>
    <property type="match status" value="1"/>
</dbReference>
<dbReference type="FunFam" id="3.40.140.10:FF:000009">
    <property type="entry name" value="26S proteasome non-ATPase regulatory subunit 7"/>
    <property type="match status" value="1"/>
</dbReference>
<dbReference type="Gene3D" id="3.40.140.10">
    <property type="entry name" value="Cytidine Deaminase, domain 2"/>
    <property type="match status" value="1"/>
</dbReference>
<dbReference type="InterPro" id="IPR024969">
    <property type="entry name" value="EIF3F/CSN6-like_C"/>
</dbReference>
<dbReference type="InterPro" id="IPR000555">
    <property type="entry name" value="JAMM/MPN+_dom"/>
</dbReference>
<dbReference type="InterPro" id="IPR037518">
    <property type="entry name" value="MPN"/>
</dbReference>
<dbReference type="InterPro" id="IPR033858">
    <property type="entry name" value="MPN_RPN7_8"/>
</dbReference>
<dbReference type="PANTHER" id="PTHR10540:SF7">
    <property type="entry name" value="26S PROTEASOME NON-ATPASE REGULATORY SUBUNIT 7"/>
    <property type="match status" value="1"/>
</dbReference>
<dbReference type="PANTHER" id="PTHR10540">
    <property type="entry name" value="EUKARYOTIC TRANSLATION INITIATION FACTOR 3 SUBUNIT F-RELATED"/>
    <property type="match status" value="1"/>
</dbReference>
<dbReference type="Pfam" id="PF01398">
    <property type="entry name" value="JAB"/>
    <property type="match status" value="1"/>
</dbReference>
<dbReference type="Pfam" id="PF13012">
    <property type="entry name" value="MitMem_reg"/>
    <property type="match status" value="1"/>
</dbReference>
<dbReference type="SMART" id="SM00232">
    <property type="entry name" value="JAB_MPN"/>
    <property type="match status" value="1"/>
</dbReference>
<dbReference type="PROSITE" id="PS50249">
    <property type="entry name" value="MPN"/>
    <property type="match status" value="1"/>
</dbReference>
<comment type="function">
    <text evidence="2">Component of the 26S proteasome, a multiprotein complex involved in the ATP-dependent degradation of ubiquitinated proteins. This complex plays a key role in the maintenance of protein homeostasis by removing misfolded or damaged proteins, which could impair cellular functions, and by removing proteins whose functions are no longer required. Therefore, the proteasome participates in numerous cellular processes, including cell cycle progression, apoptosis, or DNA damage repair.</text>
</comment>
<comment type="subunit">
    <text evidence="2">Component of the 19S proteasome regulatory particle complex. The 26S proteasome consists of a 20S core particle (CP) and two 19S regulatory subunits (RP). The regulatory particle is made of a lid composed of 9 subunits including PSMD7, a base containing 6 ATPases and few additional components. Within the complex, PSMD7 interacts with subunit PSMD4 through their respective MPN domain. Interacts with TRIM5.</text>
</comment>
<comment type="miscellaneous">
    <text evidence="2">Does not bind a metal ion.</text>
</comment>
<comment type="similarity">
    <text evidence="5">Belongs to the peptidase M67A family.</text>
</comment>
<organism>
    <name type="scientific">Bos taurus</name>
    <name type="common">Bovine</name>
    <dbReference type="NCBI Taxonomy" id="9913"/>
    <lineage>
        <taxon>Eukaryota</taxon>
        <taxon>Metazoa</taxon>
        <taxon>Chordata</taxon>
        <taxon>Craniata</taxon>
        <taxon>Vertebrata</taxon>
        <taxon>Euteleostomi</taxon>
        <taxon>Mammalia</taxon>
        <taxon>Eutheria</taxon>
        <taxon>Laurasiatheria</taxon>
        <taxon>Artiodactyla</taxon>
        <taxon>Ruminantia</taxon>
        <taxon>Pecora</taxon>
        <taxon>Bovidae</taxon>
        <taxon>Bovinae</taxon>
        <taxon>Bos</taxon>
    </lineage>
</organism>
<gene>
    <name type="primary">PSMD7</name>
</gene>
<keyword id="KW-0007">Acetylation</keyword>
<keyword id="KW-1017">Isopeptide bond</keyword>
<keyword id="KW-0647">Proteasome</keyword>
<keyword id="KW-1185">Reference proteome</keyword>
<keyword id="KW-0832">Ubl conjugation</keyword>
<feature type="chain" id="PRO_0000330328" description="26S proteasome non-ATPase regulatory subunit 7">
    <location>
        <begin position="1"/>
        <end position="322"/>
    </location>
</feature>
<feature type="domain" description="MPN" evidence="3">
    <location>
        <begin position="9"/>
        <end position="144"/>
    </location>
</feature>
<feature type="region of interest" description="Disordered" evidence="4">
    <location>
        <begin position="281"/>
        <end position="322"/>
    </location>
</feature>
<feature type="modified residue" description="N6-acetyllysine" evidence="2">
    <location>
        <position position="204"/>
    </location>
</feature>
<feature type="modified residue" description="N6-acetyllysine" evidence="2">
    <location>
        <position position="214"/>
    </location>
</feature>
<feature type="modified residue" description="N6-acetyllysine" evidence="1">
    <location>
        <position position="314"/>
    </location>
</feature>
<feature type="modified residue" description="N6-acetyllysine" evidence="1">
    <location>
        <position position="315"/>
    </location>
</feature>
<feature type="cross-link" description="Glycyl lysine isopeptide (Lys-Gly) (interchain with G-Cter in ubiquitin)" evidence="2">
    <location>
        <position position="180"/>
    </location>
</feature>
<evidence type="ECO:0000250" key="1">
    <source>
        <dbReference type="UniProtKB" id="P26516"/>
    </source>
</evidence>
<evidence type="ECO:0000250" key="2">
    <source>
        <dbReference type="UniProtKB" id="P51665"/>
    </source>
</evidence>
<evidence type="ECO:0000255" key="3">
    <source>
        <dbReference type="PROSITE-ProRule" id="PRU01182"/>
    </source>
</evidence>
<evidence type="ECO:0000256" key="4">
    <source>
        <dbReference type="SAM" id="MobiDB-lite"/>
    </source>
</evidence>
<evidence type="ECO:0000305" key="5"/>